<feature type="chain" id="PRO_0000212818" description="Ubiquitin-like modifier-activating enzyme atg7">
    <location>
        <begin position="1"/>
        <end position="699"/>
    </location>
</feature>
<feature type="region of interest" description="Disordered" evidence="2">
    <location>
        <begin position="680"/>
        <end position="699"/>
    </location>
</feature>
<feature type="short sequence motif" description="GXGXXG motif">
    <location>
        <begin position="370"/>
        <end position="375"/>
    </location>
</feature>
<feature type="compositionally biased region" description="Acidic residues" evidence="2">
    <location>
        <begin position="682"/>
        <end position="699"/>
    </location>
</feature>
<feature type="active site" description="Glycyl thioester intermediate" evidence="1">
    <location>
        <position position="550"/>
    </location>
</feature>
<reference key="1">
    <citation type="journal article" date="2003" name="Nucleic Acids Res.">
        <title>What's in the genome of a filamentous fungus? Analysis of the Neurospora genome sequence.</title>
        <authorList>
            <person name="Mannhaupt G."/>
            <person name="Montrone C."/>
            <person name="Haase D."/>
            <person name="Mewes H.-W."/>
            <person name="Aign V."/>
            <person name="Hoheisel J.D."/>
            <person name="Fartmann B."/>
            <person name="Nyakatura G."/>
            <person name="Kempken F."/>
            <person name="Maier J."/>
            <person name="Schulte U."/>
        </authorList>
    </citation>
    <scope>NUCLEOTIDE SEQUENCE [LARGE SCALE GENOMIC DNA]</scope>
    <source>
        <strain>ATCC 24698 / 74-OR23-1A / CBS 708.71 / DSM 1257 / FGSC 987</strain>
    </source>
</reference>
<reference key="2">
    <citation type="journal article" date="2003" name="Nature">
        <title>The genome sequence of the filamentous fungus Neurospora crassa.</title>
        <authorList>
            <person name="Galagan J.E."/>
            <person name="Calvo S.E."/>
            <person name="Borkovich K.A."/>
            <person name="Selker E.U."/>
            <person name="Read N.D."/>
            <person name="Jaffe D.B."/>
            <person name="FitzHugh W."/>
            <person name="Ma L.-J."/>
            <person name="Smirnov S."/>
            <person name="Purcell S."/>
            <person name="Rehman B."/>
            <person name="Elkins T."/>
            <person name="Engels R."/>
            <person name="Wang S."/>
            <person name="Nielsen C.B."/>
            <person name="Butler J."/>
            <person name="Endrizzi M."/>
            <person name="Qui D."/>
            <person name="Ianakiev P."/>
            <person name="Bell-Pedersen D."/>
            <person name="Nelson M.A."/>
            <person name="Werner-Washburne M."/>
            <person name="Selitrennikoff C.P."/>
            <person name="Kinsey J.A."/>
            <person name="Braun E.L."/>
            <person name="Zelter A."/>
            <person name="Schulte U."/>
            <person name="Kothe G.O."/>
            <person name="Jedd G."/>
            <person name="Mewes H.-W."/>
            <person name="Staben C."/>
            <person name="Marcotte E."/>
            <person name="Greenberg D."/>
            <person name="Roy A."/>
            <person name="Foley K."/>
            <person name="Naylor J."/>
            <person name="Stange-Thomann N."/>
            <person name="Barrett R."/>
            <person name="Gnerre S."/>
            <person name="Kamal M."/>
            <person name="Kamvysselis M."/>
            <person name="Mauceli E.W."/>
            <person name="Bielke C."/>
            <person name="Rudd S."/>
            <person name="Frishman D."/>
            <person name="Krystofova S."/>
            <person name="Rasmussen C."/>
            <person name="Metzenberg R.L."/>
            <person name="Perkins D.D."/>
            <person name="Kroken S."/>
            <person name="Cogoni C."/>
            <person name="Macino G."/>
            <person name="Catcheside D.E.A."/>
            <person name="Li W."/>
            <person name="Pratt R.J."/>
            <person name="Osmani S.A."/>
            <person name="DeSouza C.P.C."/>
            <person name="Glass N.L."/>
            <person name="Orbach M.J."/>
            <person name="Berglund J.A."/>
            <person name="Voelker R."/>
            <person name="Yarden O."/>
            <person name="Plamann M."/>
            <person name="Seiler S."/>
            <person name="Dunlap J.C."/>
            <person name="Radford A."/>
            <person name="Aramayo R."/>
            <person name="Natvig D.O."/>
            <person name="Alex L.A."/>
            <person name="Mannhaupt G."/>
            <person name="Ebbole D.J."/>
            <person name="Freitag M."/>
            <person name="Paulsen I."/>
            <person name="Sachs M.S."/>
            <person name="Lander E.S."/>
            <person name="Nusbaum C."/>
            <person name="Birren B.W."/>
        </authorList>
    </citation>
    <scope>NUCLEOTIDE SEQUENCE [LARGE SCALE GENOMIC DNA]</scope>
    <source>
        <strain>ATCC 24698 / 74-OR23-1A / CBS 708.71 / DSM 1257 / FGSC 987</strain>
    </source>
</reference>
<accession>Q871U2</accession>
<accession>Q1K6Y7</accession>
<accession>V5IMK4</accession>
<evidence type="ECO:0000250" key="1"/>
<evidence type="ECO:0000256" key="2">
    <source>
        <dbReference type="SAM" id="MobiDB-lite"/>
    </source>
</evidence>
<evidence type="ECO:0000305" key="3"/>
<gene>
    <name type="primary">apg-5</name>
    <name type="synonym">atg7</name>
    <name type="ORF">100H1.190</name>
    <name type="ORF">NCU06672</name>
</gene>
<organism>
    <name type="scientific">Neurospora crassa (strain ATCC 24698 / 74-OR23-1A / CBS 708.71 / DSM 1257 / FGSC 987)</name>
    <dbReference type="NCBI Taxonomy" id="367110"/>
    <lineage>
        <taxon>Eukaryota</taxon>
        <taxon>Fungi</taxon>
        <taxon>Dikarya</taxon>
        <taxon>Ascomycota</taxon>
        <taxon>Pezizomycotina</taxon>
        <taxon>Sordariomycetes</taxon>
        <taxon>Sordariomycetidae</taxon>
        <taxon>Sordariales</taxon>
        <taxon>Sordariaceae</taxon>
        <taxon>Neurospora</taxon>
    </lineage>
</organism>
<proteinExistence type="inferred from homology"/>
<sequence>MDLKFATFSSEIELPFYSALFSSKLDHDKLDSSARPVLGLYEPRSHASPEASTRMQILGSALTSDQDESGPLGMTRAEGYIKNVNTIEEFKNTDKNAMIKKAGEQIWDAIQDGTIYSCPSLLASFRILSYADLKKYKFTYWFAFPALHSEPQWKRTGPIGRLTSDESTALVERIGTWRYMVDRREHGFFLAKKVRREAAGPRSSLDDPGVDIGYRWDIGSLRDFETGFFNDAAEEDRYVAFVDPSNYPEYPSWPLRNLLILIRQRYRLNKVQILCYRDTQPRRHEARSTILPLAMDQVGDVELKCMPKVTGWERNGNGDLRPRVANLAEYMDPTRLADQAVDLNLKLMKWRLAPNLDLDAIKNTKCLLLGAGTLGSYVSRNLLGWGVRKITFIDYGSVSYSNPVRQPLFKFEDCHNGGKPKAIQAAEALKEIYPGVDVEGYALSVPMLDHAIHNEAKTKADFDKLKELIDSHDAIFLLMDTRESRWLPTLMGKAANKIVMNAALGFDTYVVMRHGAAPNDGSEETLGCYFCNDVVVAADSMKDQTLDQQCTVTRPGVAAIASALLVELLTSILQHPLKQHAPAPVSTGTGSAVSYERDPPDHPLGLVPHQVRGFLSNFQNMVIRGKSYPQCSACSKPILDAYKEGGWEFVKTALASRDYVAELSGLAEVQRLAEKAAAEMQWSEDEEGMDEEEGEGELI</sequence>
<dbReference type="EMBL" id="BX294019">
    <property type="protein sequence ID" value="CAD70899.1"/>
    <property type="molecule type" value="Genomic_DNA"/>
</dbReference>
<dbReference type="EMBL" id="CM002240">
    <property type="protein sequence ID" value="ESA42585.1"/>
    <property type="molecule type" value="Genomic_DNA"/>
</dbReference>
<dbReference type="RefSeq" id="XP_011394689.1">
    <property type="nucleotide sequence ID" value="XM_011396387.1"/>
</dbReference>
<dbReference type="SMR" id="Q871U2"/>
<dbReference type="FunCoup" id="Q871U2">
    <property type="interactions" value="729"/>
</dbReference>
<dbReference type="STRING" id="367110.Q871U2"/>
<dbReference type="PaxDb" id="5141-EFNCRP00000006657"/>
<dbReference type="EnsemblFungi" id="ESA42585">
    <property type="protein sequence ID" value="ESA42585"/>
    <property type="gene ID" value="NCU06672"/>
</dbReference>
<dbReference type="GeneID" id="3877057"/>
<dbReference type="KEGG" id="ncr:NCU06672"/>
<dbReference type="VEuPathDB" id="FungiDB:NCU06672"/>
<dbReference type="HOGENOM" id="CLU_012998_2_1_1"/>
<dbReference type="InParanoid" id="Q871U2"/>
<dbReference type="OMA" id="RQIWDAI"/>
<dbReference type="OrthoDB" id="338614at2759"/>
<dbReference type="Proteomes" id="UP000001805">
    <property type="component" value="Chromosome 2, Linkage Group V"/>
</dbReference>
<dbReference type="GO" id="GO:0005737">
    <property type="term" value="C:cytoplasm"/>
    <property type="evidence" value="ECO:0000318"/>
    <property type="project" value="GO_Central"/>
</dbReference>
<dbReference type="GO" id="GO:0000407">
    <property type="term" value="C:phagophore assembly site"/>
    <property type="evidence" value="ECO:0000318"/>
    <property type="project" value="GO_Central"/>
</dbReference>
<dbReference type="GO" id="GO:0019778">
    <property type="term" value="F:Atg12 activating enzyme activity"/>
    <property type="evidence" value="ECO:0000318"/>
    <property type="project" value="GO_Central"/>
</dbReference>
<dbReference type="GO" id="GO:0019779">
    <property type="term" value="F:Atg8 activating enzyme activity"/>
    <property type="evidence" value="ECO:0000318"/>
    <property type="project" value="GO_Central"/>
</dbReference>
<dbReference type="GO" id="GO:0000045">
    <property type="term" value="P:autophagosome assembly"/>
    <property type="evidence" value="ECO:0000318"/>
    <property type="project" value="GO_Central"/>
</dbReference>
<dbReference type="GO" id="GO:0006995">
    <property type="term" value="P:cellular response to nitrogen starvation"/>
    <property type="evidence" value="ECO:0000318"/>
    <property type="project" value="GO_Central"/>
</dbReference>
<dbReference type="GO" id="GO:0000423">
    <property type="term" value="P:mitophagy"/>
    <property type="evidence" value="ECO:0000318"/>
    <property type="project" value="GO_Central"/>
</dbReference>
<dbReference type="GO" id="GO:0034727">
    <property type="term" value="P:piecemeal microautophagy of the nucleus"/>
    <property type="evidence" value="ECO:0000318"/>
    <property type="project" value="GO_Central"/>
</dbReference>
<dbReference type="GO" id="GO:0032446">
    <property type="term" value="P:protein modification by small protein conjugation"/>
    <property type="evidence" value="ECO:0000318"/>
    <property type="project" value="GO_Central"/>
</dbReference>
<dbReference type="GO" id="GO:0015031">
    <property type="term" value="P:protein transport"/>
    <property type="evidence" value="ECO:0007669"/>
    <property type="project" value="UniProtKB-KW"/>
</dbReference>
<dbReference type="CDD" id="cd01486">
    <property type="entry name" value="Apg7"/>
    <property type="match status" value="1"/>
</dbReference>
<dbReference type="FunFam" id="3.40.140.100:FF:000003">
    <property type="entry name" value="Autophagy ubiquitin-activating enzyme ApgG"/>
    <property type="match status" value="1"/>
</dbReference>
<dbReference type="FunFam" id="3.40.50.720:FF:000243">
    <property type="entry name" value="Ubiquitin-like modifier-activating enzyme ATG7"/>
    <property type="match status" value="1"/>
</dbReference>
<dbReference type="FunFam" id="3.40.140.70:FF:000001">
    <property type="entry name" value="Ubiquitin-like modifier-activating enzyme atg7"/>
    <property type="match status" value="1"/>
</dbReference>
<dbReference type="Gene3D" id="3.40.50.720">
    <property type="entry name" value="NAD(P)-binding Rossmann-like Domain"/>
    <property type="match status" value="1"/>
</dbReference>
<dbReference type="Gene3D" id="3.40.140.100">
    <property type="entry name" value="Ubiquitin-like modifier-activating enzyme ATG7 C-terminal domain"/>
    <property type="match status" value="1"/>
</dbReference>
<dbReference type="Gene3D" id="3.40.140.70">
    <property type="entry name" value="Ubiquitin-like modifier-activating enzyme ATG7 N-terminal domain"/>
    <property type="match status" value="1"/>
</dbReference>
<dbReference type="InterPro" id="IPR006285">
    <property type="entry name" value="Atg7"/>
</dbReference>
<dbReference type="InterPro" id="IPR032197">
    <property type="entry name" value="Atg7_N"/>
</dbReference>
<dbReference type="InterPro" id="IPR042522">
    <property type="entry name" value="Atg7_N_1"/>
</dbReference>
<dbReference type="InterPro" id="IPR042523">
    <property type="entry name" value="Atg7_N_2"/>
</dbReference>
<dbReference type="InterPro" id="IPR045886">
    <property type="entry name" value="ThiF/MoeB/HesA"/>
</dbReference>
<dbReference type="InterPro" id="IPR000594">
    <property type="entry name" value="ThiF_NAD_FAD-bd"/>
</dbReference>
<dbReference type="InterPro" id="IPR035985">
    <property type="entry name" value="Ubiquitin-activating_enz"/>
</dbReference>
<dbReference type="NCBIfam" id="TIGR01381">
    <property type="entry name" value="E1_like_apg7"/>
    <property type="match status" value="1"/>
</dbReference>
<dbReference type="PANTHER" id="PTHR10953">
    <property type="entry name" value="UBIQUITIN-ACTIVATING ENZYME E1"/>
    <property type="match status" value="1"/>
</dbReference>
<dbReference type="PANTHER" id="PTHR10953:SF3">
    <property type="entry name" value="UBIQUITIN-LIKE MODIFIER-ACTIVATING ENZYME ATG7"/>
    <property type="match status" value="1"/>
</dbReference>
<dbReference type="Pfam" id="PF16420">
    <property type="entry name" value="ATG7_N"/>
    <property type="match status" value="1"/>
</dbReference>
<dbReference type="Pfam" id="PF00899">
    <property type="entry name" value="ThiF"/>
    <property type="match status" value="1"/>
</dbReference>
<dbReference type="SUPFAM" id="SSF69572">
    <property type="entry name" value="Activating enzymes of the ubiquitin-like proteins"/>
    <property type="match status" value="1"/>
</dbReference>
<keyword id="KW-0072">Autophagy</keyword>
<keyword id="KW-0963">Cytoplasm</keyword>
<keyword id="KW-0653">Protein transport</keyword>
<keyword id="KW-1185">Reference proteome</keyword>
<keyword id="KW-0813">Transport</keyword>
<keyword id="KW-0833">Ubl conjugation pathway</keyword>
<protein>
    <recommendedName>
        <fullName>Ubiquitin-like modifier-activating enzyme atg7</fullName>
    </recommendedName>
    <alternativeName>
        <fullName>ATG12-activating enzyme E1 atg7</fullName>
    </alternativeName>
    <alternativeName>
        <fullName>Autophagy-related protein 7</fullName>
    </alternativeName>
</protein>
<name>ATG7_NEUCR</name>
<comment type="function">
    <text evidence="1">E1-like activating enzyme involved in the 2 ubiquitin-like systems required for cytoplasm to vacuole transport (Cvt) and autophagy. Activates atg12 for its conjugation with apg-4/atg5 and apg-6/atg8 for its conjugation with phosphatidylethanolamine. Both systems are needed for the apg-6/atg8 association to Cvt vesicles and autophagosomes membranes. Autophagy is essential for maintenance of amino acid levels and protein synthesis under nitrogen starvation. Required for selective autophagic degradation of the nucleus (nucleophagy) as well as for mitophagy which contributes to regulate mitochondrial quantity and quality by eliminating the mitochondria to a basal level to fulfill cellular energy requirements and preventing excess ROS production. Plays a role in the regulation of filamentous growth and chronological longevity (By similarity).</text>
</comment>
<comment type="subunit">
    <text evidence="1">Homodimer.</text>
</comment>
<comment type="subcellular location">
    <subcellularLocation>
        <location evidence="1">Cytoplasm</location>
    </subcellularLocation>
    <subcellularLocation>
        <location evidence="1">Preautophagosomal structure</location>
    </subcellularLocation>
</comment>
<comment type="domain">
    <text evidence="1">The GxGxxG motif is important for the function, possibly through binding with ATP.</text>
</comment>
<comment type="similarity">
    <text evidence="3">Belongs to the ATG7 family.</text>
</comment>